<feature type="signal peptide" evidence="1">
    <location>
        <begin position="1"/>
        <end position="25"/>
    </location>
</feature>
<feature type="chain" id="PRO_0000039363" description="Fusion glycoprotein F0" evidence="1">
    <location>
        <begin position="26"/>
        <end position="565"/>
    </location>
</feature>
<feature type="chain" id="PRO_0000039364" description="Fusion glycoprotein F2" evidence="1">
    <location>
        <begin position="26"/>
        <end position="116"/>
    </location>
</feature>
<feature type="chain" id="PRO_0000039365" description="Fusion glycoprotein F1" evidence="1">
    <location>
        <begin position="117"/>
        <end position="565"/>
    </location>
</feature>
<feature type="topological domain" description="Extracellular" evidence="1">
    <location>
        <begin position="26"/>
        <end position="500"/>
    </location>
</feature>
<feature type="transmembrane region" description="Helical" evidence="1">
    <location>
        <begin position="501"/>
        <end position="521"/>
    </location>
</feature>
<feature type="topological domain" description="Cytoplasmic" evidence="1">
    <location>
        <begin position="522"/>
        <end position="565"/>
    </location>
</feature>
<feature type="region of interest" description="Fusion peptide" evidence="1">
    <location>
        <begin position="117"/>
        <end position="141"/>
    </location>
</feature>
<feature type="region of interest" description="Leucine-zipper" evidence="2">
    <location>
        <begin position="269"/>
        <end position="307"/>
    </location>
</feature>
<feature type="coiled-coil region" evidence="2">
    <location>
        <begin position="142"/>
        <end position="170"/>
    </location>
</feature>
<feature type="coiled-coil region" evidence="2">
    <location>
        <begin position="466"/>
        <end position="491"/>
    </location>
</feature>
<feature type="site" description="Cleavage; by arginine-specific endoprotease" evidence="1">
    <location>
        <begin position="116"/>
        <end position="117"/>
    </location>
</feature>
<feature type="glycosylation site" description="N-linked (GlcNAc...) asparagine; by host" evidence="1">
    <location>
        <position position="104"/>
    </location>
</feature>
<feature type="glycosylation site" description="N-linked (GlcNAc...) asparagine; by host" evidence="1">
    <location>
        <position position="245"/>
    </location>
</feature>
<feature type="glycosylation site" description="N-linked (GlcNAc...) asparagine; by host" evidence="1">
    <location>
        <position position="449"/>
    </location>
</feature>
<feature type="disulfide bond" description="Interchain (between F2 and F1 chains)" evidence="1">
    <location>
        <begin position="70"/>
        <end position="199"/>
    </location>
</feature>
<feature type="disulfide bond" evidence="1">
    <location>
        <begin position="338"/>
        <end position="347"/>
    </location>
</feature>
<feature type="disulfide bond" evidence="1">
    <location>
        <begin position="362"/>
        <end position="370"/>
    </location>
</feature>
<feature type="disulfide bond" evidence="1">
    <location>
        <begin position="394"/>
        <end position="399"/>
    </location>
</feature>
<feature type="disulfide bond" evidence="1">
    <location>
        <begin position="401"/>
        <end position="424"/>
    </location>
</feature>
<feature type="sequence variant">
    <original>ST</original>
    <variation>WR</variation>
    <location>
        <begin position="397"/>
        <end position="398"/>
    </location>
</feature>
<name>FUS_SENDA</name>
<dbReference type="EMBL" id="AB039658">
    <property type="protein sequence ID" value="BAB20024.1"/>
    <property type="molecule type" value="Genomic_RNA"/>
</dbReference>
<dbReference type="EMBL" id="AB065186">
    <property type="protein sequence ID" value="BAC79130.1"/>
    <property type="molecule type" value="Genomic_RNA"/>
</dbReference>
<dbReference type="EMBL" id="AB065187">
    <property type="protein sequence ID" value="BAC07510.1"/>
    <property type="molecule type" value="Genomic_RNA"/>
</dbReference>
<dbReference type="EMBL" id="AB065188">
    <property type="protein sequence ID" value="BAC79138.1"/>
    <property type="molecule type" value="Genomic_RNA"/>
</dbReference>
<dbReference type="EMBL" id="AB065189">
    <property type="protein sequence ID" value="BAC79146.1"/>
    <property type="molecule type" value="Genomic_RNA"/>
</dbReference>
<dbReference type="EMBL" id="D11446">
    <property type="protein sequence ID" value="BAA02011.1"/>
    <property type="molecule type" value="Genomic_RNA"/>
</dbReference>
<dbReference type="SMR" id="Q9DUD9"/>
<dbReference type="GlyCosmos" id="Q9DUD9">
    <property type="glycosylation" value="3 sites, No reported glycans"/>
</dbReference>
<dbReference type="Proteomes" id="UP000007191">
    <property type="component" value="Genome"/>
</dbReference>
<dbReference type="Proteomes" id="UP000008510">
    <property type="component" value="Genome"/>
</dbReference>
<dbReference type="Proteomes" id="UP000008857">
    <property type="component" value="Genome"/>
</dbReference>
<dbReference type="Proteomes" id="UP000180650">
    <property type="component" value="Genome"/>
</dbReference>
<dbReference type="Proteomes" id="UP000180718">
    <property type="component" value="Genome"/>
</dbReference>
<dbReference type="GO" id="GO:0020002">
    <property type="term" value="C:host cell plasma membrane"/>
    <property type="evidence" value="ECO:0007669"/>
    <property type="project" value="UniProtKB-SubCell"/>
</dbReference>
<dbReference type="GO" id="GO:0016020">
    <property type="term" value="C:membrane"/>
    <property type="evidence" value="ECO:0007669"/>
    <property type="project" value="UniProtKB-KW"/>
</dbReference>
<dbReference type="GO" id="GO:0019031">
    <property type="term" value="C:viral envelope"/>
    <property type="evidence" value="ECO:0007669"/>
    <property type="project" value="UniProtKB-KW"/>
</dbReference>
<dbReference type="GO" id="GO:0055036">
    <property type="term" value="C:virion membrane"/>
    <property type="evidence" value="ECO:0007669"/>
    <property type="project" value="UniProtKB-SubCell"/>
</dbReference>
<dbReference type="GO" id="GO:0019064">
    <property type="term" value="P:fusion of virus membrane with host plasma membrane"/>
    <property type="evidence" value="ECO:0007669"/>
    <property type="project" value="UniProtKB-KW"/>
</dbReference>
<dbReference type="GO" id="GO:0046718">
    <property type="term" value="P:symbiont entry into host cell"/>
    <property type="evidence" value="ECO:0007669"/>
    <property type="project" value="UniProtKB-KW"/>
</dbReference>
<dbReference type="Gene3D" id="1.10.287.2480">
    <property type="match status" value="2"/>
</dbReference>
<dbReference type="Gene3D" id="2.60.40.1690">
    <property type="entry name" value="Head and neck region of the ectodomain of NDV fusion glycoprotein"/>
    <property type="match status" value="1"/>
</dbReference>
<dbReference type="Gene3D" id="2.40.490.10">
    <property type="entry name" value="Newcastle disease virus like domain"/>
    <property type="match status" value="1"/>
</dbReference>
<dbReference type="InterPro" id="IPR000776">
    <property type="entry name" value="Fusion_F0_Paramyxovir"/>
</dbReference>
<dbReference type="Pfam" id="PF00523">
    <property type="entry name" value="Fusion_gly"/>
    <property type="match status" value="1"/>
</dbReference>
<dbReference type="SUPFAM" id="SSF69922">
    <property type="entry name" value="Head and neck region of the ectodomain of NDV fusion glycoprotein"/>
    <property type="match status" value="1"/>
</dbReference>
<dbReference type="SUPFAM" id="SSF58069">
    <property type="entry name" value="Virus ectodomain"/>
    <property type="match status" value="1"/>
</dbReference>
<proteinExistence type="inferred from homology"/>
<sequence length="565" mass="61426">MATYIQRVQCISALLSVVLTTLVSCQIPRDRLSNIGVIVDEGKSLKIAGSHESRYIVLSLVPGVDLENGCGTAQVIQYKSLLNRLLIPLRDALDLQEALITVTNDTMTSADVPQSRFFGAVIGTIALGVATSAQITAGIALAEAREAKRDIALIKESMTKTHKSIELLQNAVGEQILALKTLQDFVNDEIKPAISELGCETAALRLGIKLTQHYSELLTAFGSNFGTIGEKSLTLQALSSLYSANITEIMTTIRTGQSNIYDVIYTEQIKGTVIDVDLERYMVTLSVKIPILSEVPGVLIHKASSISYNIDGEEWYVTVPSHILSRASFLGGANIADCVESRLTYICPRDPAQLIPDSQQKCILGDTTRCPVTKVVDNLIPKFAFVNGGVVANCIASTCTCGTGRRPISQDRSKGVVFLTHDNCGLIGVNGIELYANRKGHDATWGVQNLTVGPAIAIRPVDISLNLAAATDFLQDSRAELEKARKILSEVGRWYNSGATLITIIVVMIVVLVVIIVIVIVLYRLRRSMLMSNPAGRISRDTYTLEPKIRHMYTNGGFDAMTEKR</sequence>
<gene>
    <name type="primary">F</name>
</gene>
<organism>
    <name type="scientific">Sendai virus (strain Hamamatsu)</name>
    <name type="common">SeV</name>
    <dbReference type="NCBI Taxonomy" id="302271"/>
    <lineage>
        <taxon>Viruses</taxon>
        <taxon>Riboviria</taxon>
        <taxon>Orthornavirae</taxon>
        <taxon>Negarnaviricota</taxon>
        <taxon>Haploviricotina</taxon>
        <taxon>Monjiviricetes</taxon>
        <taxon>Mononegavirales</taxon>
        <taxon>Paramyxoviridae</taxon>
        <taxon>Feraresvirinae</taxon>
        <taxon>Respirovirus</taxon>
        <taxon>Respirovirus muris</taxon>
    </lineage>
</organism>
<protein>
    <recommendedName>
        <fullName>Fusion glycoprotein F0</fullName>
        <shortName>Protein F</shortName>
    </recommendedName>
    <component>
        <recommendedName>
            <fullName>Fusion glycoprotein F2</fullName>
        </recommendedName>
    </component>
    <component>
        <recommendedName>
            <fullName>Fusion glycoprotein F1</fullName>
        </recommendedName>
    </component>
</protein>
<reference key="1">
    <citation type="journal article" date="1994" name="Arch. Virol.">
        <title>A field isolate of Sendai virus: its high virulence to mice and genetic divergence from prototype strains.</title>
        <authorList>
            <person name="Sakaguchi T."/>
            <person name="Fujii Y."/>
            <person name="Kiyotani K."/>
            <person name="Sasaki M."/>
            <person name="Yoshida T."/>
        </authorList>
    </citation>
    <scope>NUCLEOTIDE SEQUENCE [GENOMIC RNA]</scope>
</reference>
<reference key="2">
    <citation type="journal article" date="2001" name="Virus Genes">
        <title>Conserved and non-conserved regions in the Sendai virus genome: evolution of a gene possessing overlapping reading frames.</title>
        <authorList>
            <person name="Fujii Y."/>
            <person name="Kiyotani K."/>
            <person name="Yoshida T."/>
            <person name="Sakaguchi T."/>
        </authorList>
    </citation>
    <scope>NUCLEOTIDE SEQUENCE [GENOMIC RNA]</scope>
</reference>
<reference key="3">
    <citation type="journal article" date="2002" name="J. Virol.">
        <title>Involvement of the leader sequence in Sendai virus pathogenesis revealed by recovery of a pathogenic field isolate from cDNA.</title>
        <authorList>
            <person name="Fujii Y."/>
            <person name="Sakaguchi T."/>
            <person name="Kiyotani K."/>
            <person name="Huang C."/>
            <person name="Fukuhara N."/>
            <person name="Egi Y."/>
            <person name="Yoshida T."/>
        </authorList>
    </citation>
    <scope>NUCLEOTIDE SEQUENCE [GENOMIC RNA]</scope>
    <source>
        <strain>Isolate E15cl2</strain>
    </source>
</reference>
<reference key="4">
    <citation type="journal article" date="2002" name="Virus Genes">
        <title>Identification of mutations associated with attenuation of virulence of a field Sendai virus isolate by egg passage.</title>
        <authorList>
            <person name="Fujii Y."/>
            <person name="Sakaguchi T."/>
            <person name="Kiyotani K."/>
            <person name="Huang C."/>
            <person name="Fukuhara N."/>
            <person name="Yoshida T."/>
        </authorList>
    </citation>
    <scope>NUCLEOTIDE SEQUENCE [GENOMIC RNA]</scope>
    <source>
        <strain>Isolate E15cl2</strain>
        <strain>Isolate E30cl2</strain>
        <strain>Isolate E30M15cl5</strain>
    </source>
</reference>
<reference key="5">
    <citation type="submission" date="2001-07" db="EMBL/GenBank/DDBJ databases">
        <authorList>
            <person name="Fujii Y."/>
            <person name="Kiyotani K."/>
            <person name="Huang C."/>
            <person name="Fukuhara N."/>
            <person name="Egi K."/>
            <person name="Yoshida T."/>
            <person name="Sakaguchi T."/>
        </authorList>
    </citation>
    <scope>NUCLEOTIDE SEQUENCE [GENOMIC RNA]</scope>
    <source>
        <strain>Isolate E50cl9</strain>
    </source>
</reference>
<accession>Q9DUD9</accession>
<accession>Q88267</accession>
<comment type="function">
    <text evidence="1">Class I viral fusion protein. Under the current model, the protein has at least 3 conformational states: pre-fusion native state, pre-hairpin intermediate state, and post-fusion hairpin state. During viral and plasma cell membrane fusion, the heptad repeat (HR) regions assume a trimer-of-hairpins structure, positioning the fusion peptide in close proximity to the C-terminal region of the ectodomain. The formation of this structure appears to drive apposition and subsequent fusion of viral and plasma cell membranes. Directs fusion of viral and cellular membranes leading to delivery of the nucleocapsid into the cytoplasm. This fusion is pH independent and occurs directly at the outer cell membrane. The trimer of F1-F2 (F protein) interacts with HN tetramer at the virion surface. Upon HN binding to its cellular receptor, the hydrophobic fusion peptide is unmasked and interacts with the cellular membrane, inducing the fusion between cell and virion membranes. Later in infection, F proteins expressed at the plasma membrane of infected cells could mediate fusion with adjacent cells to form syncytia, a cytopathic effect that could lead to tissue necrosis (By similarity).</text>
</comment>
<comment type="subunit">
    <text evidence="1">Homotrimer of disulfide-linked F1-F2. Interacts with HN and M proteins (By similarity).</text>
</comment>
<comment type="subcellular location">
    <subcellularLocation>
        <location evidence="1">Virion membrane</location>
        <topology evidence="1">Single-pass type I membrane protein</topology>
    </subcellularLocation>
    <subcellularLocation>
        <location evidence="1">Host cell membrane</location>
        <topology evidence="1">Single-pass membrane protein</topology>
    </subcellularLocation>
</comment>
<comment type="domain">
    <text evidence="1">The cytoplasmic region mediates the interaction with HN and M proteins.</text>
</comment>
<comment type="PTM">
    <text evidence="1">In natural infection, inactive F0 is matured into F1 and F2 outside the cell by one or more trypsin-like, arginine-specific endoprotease secreted by the bronchial epithelial cells. One identified protease that may be involved in this process is tryptase Clara. Unlike most paramyxoviruses, Sendai F0 processing occurs on the cell surface and induces a conformational change in the protein that unmasks the fusion peptide. F0 maturation is a primary determinant for organ tropism and pathogenicity. F1 and F2 display interchain and intrachain disulfide bonds, that are necessary for correct folding and intracellular transport (By similarity).</text>
</comment>
<comment type="PTM">
    <text evidence="1">N-glycosylated; glycans consist of a mixture of high mannose-type oligosaccharides and of complex-type oligosaccharides. Glycosylation at Asn-245 is essential for membrane localization and F0 cleavage (By similarity).</text>
</comment>
<comment type="miscellaneous">
    <text>Sendai virus or recombinant F protein are widely used in cellular biology to fuse cells.</text>
</comment>
<comment type="similarity">
    <text evidence="3">Belongs to the paramyxoviruses fusion glycoprotein family.</text>
</comment>
<organismHost>
    <name type="scientific">Cavia cutleri</name>
    <name type="common">Guinea pig</name>
    <dbReference type="NCBI Taxonomy" id="10144"/>
</organismHost>
<organismHost>
    <name type="scientific">Cricetidae sp.</name>
    <name type="common">Hamster</name>
    <dbReference type="NCBI Taxonomy" id="36483"/>
</organismHost>
<organismHost>
    <name type="scientific">Mus musculus</name>
    <name type="common">Mouse</name>
    <dbReference type="NCBI Taxonomy" id="10090"/>
</organismHost>
<organismHost>
    <name type="scientific">Rattus norvegicus</name>
    <name type="common">Rat</name>
    <dbReference type="NCBI Taxonomy" id="10116"/>
</organismHost>
<keyword id="KW-0175">Coiled coil</keyword>
<keyword id="KW-1015">Disulfide bond</keyword>
<keyword id="KW-1169">Fusion of virus membrane with host cell membrane</keyword>
<keyword id="KW-1168">Fusion of virus membrane with host membrane</keyword>
<keyword id="KW-0325">Glycoprotein</keyword>
<keyword id="KW-1032">Host cell membrane</keyword>
<keyword id="KW-1043">Host membrane</keyword>
<keyword id="KW-0472">Membrane</keyword>
<keyword id="KW-0732">Signal</keyword>
<keyword id="KW-0812">Transmembrane</keyword>
<keyword id="KW-1133">Transmembrane helix</keyword>
<keyword id="KW-0261">Viral envelope protein</keyword>
<keyword id="KW-1162">Viral penetration into host cytoplasm</keyword>
<keyword id="KW-0946">Virion</keyword>
<keyword id="KW-1160">Virus entry into host cell</keyword>
<evidence type="ECO:0000250" key="1"/>
<evidence type="ECO:0000255" key="2"/>
<evidence type="ECO:0000305" key="3"/>